<keyword id="KW-0028">Amino-acid biosynthesis</keyword>
<keyword id="KW-0057">Aromatic amino acid biosynthesis</keyword>
<keyword id="KW-0210">Decarboxylase</keyword>
<keyword id="KW-0456">Lyase</keyword>
<keyword id="KW-0822">Tryptophan biosynthesis</keyword>
<gene>
    <name evidence="1" type="primary">trpC</name>
    <name type="ordered locus">Bcen2424_0531</name>
</gene>
<evidence type="ECO:0000255" key="1">
    <source>
        <dbReference type="HAMAP-Rule" id="MF_00134"/>
    </source>
</evidence>
<accession>A0K458</accession>
<protein>
    <recommendedName>
        <fullName evidence="1">Indole-3-glycerol phosphate synthase</fullName>
        <shortName evidence="1">IGPS</shortName>
        <ecNumber evidence="1">4.1.1.48</ecNumber>
    </recommendedName>
</protein>
<comment type="catalytic activity">
    <reaction evidence="1">
        <text>1-(2-carboxyphenylamino)-1-deoxy-D-ribulose 5-phosphate + H(+) = (1S,2R)-1-C-(indol-3-yl)glycerol 3-phosphate + CO2 + H2O</text>
        <dbReference type="Rhea" id="RHEA:23476"/>
        <dbReference type="ChEBI" id="CHEBI:15377"/>
        <dbReference type="ChEBI" id="CHEBI:15378"/>
        <dbReference type="ChEBI" id="CHEBI:16526"/>
        <dbReference type="ChEBI" id="CHEBI:58613"/>
        <dbReference type="ChEBI" id="CHEBI:58866"/>
        <dbReference type="EC" id="4.1.1.48"/>
    </reaction>
</comment>
<comment type="pathway">
    <text evidence="1">Amino-acid biosynthesis; L-tryptophan biosynthesis; L-tryptophan from chorismate: step 4/5.</text>
</comment>
<comment type="similarity">
    <text evidence="1">Belongs to the TrpC family.</text>
</comment>
<feature type="chain" id="PRO_1000018452" description="Indole-3-glycerol phosphate synthase">
    <location>
        <begin position="1"/>
        <end position="261"/>
    </location>
</feature>
<reference key="1">
    <citation type="submission" date="2006-08" db="EMBL/GenBank/DDBJ databases">
        <title>Complete sequence of chromosome 1 of Burkholderia cenocepacia HI2424.</title>
        <authorList>
            <person name="Copeland A."/>
            <person name="Lucas S."/>
            <person name="Lapidus A."/>
            <person name="Barry K."/>
            <person name="Detter J.C."/>
            <person name="Glavina del Rio T."/>
            <person name="Hammon N."/>
            <person name="Israni S."/>
            <person name="Pitluck S."/>
            <person name="Chain P."/>
            <person name="Malfatti S."/>
            <person name="Shin M."/>
            <person name="Vergez L."/>
            <person name="Schmutz J."/>
            <person name="Larimer F."/>
            <person name="Land M."/>
            <person name="Hauser L."/>
            <person name="Kyrpides N."/>
            <person name="Kim E."/>
            <person name="LiPuma J.J."/>
            <person name="Gonzalez C.F."/>
            <person name="Konstantinidis K."/>
            <person name="Tiedje J.M."/>
            <person name="Richardson P."/>
        </authorList>
    </citation>
    <scope>NUCLEOTIDE SEQUENCE [LARGE SCALE GENOMIC DNA]</scope>
    <source>
        <strain>HI2424</strain>
    </source>
</reference>
<proteinExistence type="inferred from homology"/>
<dbReference type="EC" id="4.1.1.48" evidence="1"/>
<dbReference type="EMBL" id="CP000458">
    <property type="protein sequence ID" value="ABK07285.1"/>
    <property type="molecule type" value="Genomic_DNA"/>
</dbReference>
<dbReference type="RefSeq" id="WP_006477043.1">
    <property type="nucleotide sequence ID" value="NC_008542.1"/>
</dbReference>
<dbReference type="SMR" id="A0K458"/>
<dbReference type="GeneID" id="83047299"/>
<dbReference type="KEGG" id="bch:Bcen2424_0531"/>
<dbReference type="HOGENOM" id="CLU_034247_2_0_4"/>
<dbReference type="UniPathway" id="UPA00035">
    <property type="reaction ID" value="UER00043"/>
</dbReference>
<dbReference type="GO" id="GO:0004425">
    <property type="term" value="F:indole-3-glycerol-phosphate synthase activity"/>
    <property type="evidence" value="ECO:0007669"/>
    <property type="project" value="UniProtKB-UniRule"/>
</dbReference>
<dbReference type="GO" id="GO:0004640">
    <property type="term" value="F:phosphoribosylanthranilate isomerase activity"/>
    <property type="evidence" value="ECO:0007669"/>
    <property type="project" value="TreeGrafter"/>
</dbReference>
<dbReference type="GO" id="GO:0000162">
    <property type="term" value="P:L-tryptophan biosynthetic process"/>
    <property type="evidence" value="ECO:0007669"/>
    <property type="project" value="UniProtKB-UniRule"/>
</dbReference>
<dbReference type="CDD" id="cd00331">
    <property type="entry name" value="IGPS"/>
    <property type="match status" value="1"/>
</dbReference>
<dbReference type="FunFam" id="3.20.20.70:FF:000024">
    <property type="entry name" value="Indole-3-glycerol phosphate synthase"/>
    <property type="match status" value="1"/>
</dbReference>
<dbReference type="Gene3D" id="3.20.20.70">
    <property type="entry name" value="Aldolase class I"/>
    <property type="match status" value="1"/>
</dbReference>
<dbReference type="HAMAP" id="MF_00134_B">
    <property type="entry name" value="IGPS_B"/>
    <property type="match status" value="1"/>
</dbReference>
<dbReference type="InterPro" id="IPR013785">
    <property type="entry name" value="Aldolase_TIM"/>
</dbReference>
<dbReference type="InterPro" id="IPR045186">
    <property type="entry name" value="Indole-3-glycerol_P_synth"/>
</dbReference>
<dbReference type="InterPro" id="IPR013798">
    <property type="entry name" value="Indole-3-glycerol_P_synth_dom"/>
</dbReference>
<dbReference type="InterPro" id="IPR001468">
    <property type="entry name" value="Indole-3-GlycerolPSynthase_CS"/>
</dbReference>
<dbReference type="InterPro" id="IPR011060">
    <property type="entry name" value="RibuloseP-bd_barrel"/>
</dbReference>
<dbReference type="NCBIfam" id="NF001373">
    <property type="entry name" value="PRK00278.1-6"/>
    <property type="match status" value="1"/>
</dbReference>
<dbReference type="NCBIfam" id="NF001377">
    <property type="entry name" value="PRK00278.2-4"/>
    <property type="match status" value="1"/>
</dbReference>
<dbReference type="PANTHER" id="PTHR22854:SF2">
    <property type="entry name" value="INDOLE-3-GLYCEROL-PHOSPHATE SYNTHASE"/>
    <property type="match status" value="1"/>
</dbReference>
<dbReference type="PANTHER" id="PTHR22854">
    <property type="entry name" value="TRYPTOPHAN BIOSYNTHESIS PROTEIN"/>
    <property type="match status" value="1"/>
</dbReference>
<dbReference type="Pfam" id="PF00218">
    <property type="entry name" value="IGPS"/>
    <property type="match status" value="1"/>
</dbReference>
<dbReference type="SUPFAM" id="SSF51366">
    <property type="entry name" value="Ribulose-phoshate binding barrel"/>
    <property type="match status" value="1"/>
</dbReference>
<dbReference type="PROSITE" id="PS00614">
    <property type="entry name" value="IGPS"/>
    <property type="match status" value="1"/>
</dbReference>
<organism>
    <name type="scientific">Burkholderia cenocepacia (strain HI2424)</name>
    <dbReference type="NCBI Taxonomy" id="331272"/>
    <lineage>
        <taxon>Bacteria</taxon>
        <taxon>Pseudomonadati</taxon>
        <taxon>Pseudomonadota</taxon>
        <taxon>Betaproteobacteria</taxon>
        <taxon>Burkholderiales</taxon>
        <taxon>Burkholderiaceae</taxon>
        <taxon>Burkholderia</taxon>
        <taxon>Burkholderia cepacia complex</taxon>
    </lineage>
</organism>
<sequence>MSDILDRIIAVKREEIAAALRSTPLEALKLEASARDLRDFVGALRAKHAAGNAAVIAEIKKASPSKGVLREHFVPADIARSYAAHGAACLSVLTDEQFFQGGVRYLEEARAACTLPVLRKDFIVDAYQIVEARAMGADAILLIAAALDTPLMQDLEAYAHSLGLAVLVEVHDRHEMEQALTLKTPLLGINNRNLRTFETSIQTTLDMLDMIPADRIVVTESGILSRTDVDTMRAANVNTFLVGEAFMRAEQPGEELARMFF</sequence>
<name>TRPC_BURCH</name>